<protein>
    <recommendedName>
        <fullName evidence="1">DNA ligase</fullName>
        <ecNumber evidence="1">6.5.1.2</ecNumber>
    </recommendedName>
    <alternativeName>
        <fullName evidence="1">Polydeoxyribonucleotide synthase [NAD(+)]</fullName>
    </alternativeName>
</protein>
<organism>
    <name type="scientific">Spiroplasma citri</name>
    <dbReference type="NCBI Taxonomy" id="2133"/>
    <lineage>
        <taxon>Bacteria</taxon>
        <taxon>Bacillati</taxon>
        <taxon>Mycoplasmatota</taxon>
        <taxon>Mollicutes</taxon>
        <taxon>Entomoplasmatales</taxon>
        <taxon>Spiroplasmataceae</taxon>
        <taxon>Spiroplasma</taxon>
    </lineage>
</organism>
<keyword id="KW-0227">DNA damage</keyword>
<keyword id="KW-0234">DNA repair</keyword>
<keyword id="KW-0235">DNA replication</keyword>
<keyword id="KW-0436">Ligase</keyword>
<keyword id="KW-0460">Magnesium</keyword>
<keyword id="KW-0464">Manganese</keyword>
<keyword id="KW-0479">Metal-binding</keyword>
<keyword id="KW-0520">NAD</keyword>
<keyword id="KW-0862">Zinc</keyword>
<gene>
    <name evidence="1" type="primary">ligA</name>
    <name type="ORF">SPICI20_035</name>
</gene>
<accession>Q14L37</accession>
<reference key="1">
    <citation type="submission" date="2006-06" db="EMBL/GenBank/DDBJ databases">
        <title>The partial chromosome sequence of Spiroplasma citri GII3-3X.</title>
        <authorList>
            <person name="Carle P."/>
            <person name="Saillard C."/>
            <person name="Blanchard A."/>
            <person name="Carrere N."/>
            <person name="Carrere S."/>
            <person name="Duret S."/>
            <person name="Eveillard S."/>
            <person name="Gaurivaud P."/>
            <person name="Gourgues G."/>
            <person name="Gouzy J."/>
            <person name="Henry A."/>
            <person name="Salar P."/>
            <person name="Laigret F."/>
            <person name="Bove J.M."/>
            <person name="Renaudin J."/>
            <person name="Foissac X."/>
        </authorList>
    </citation>
    <scope>NUCLEOTIDE SEQUENCE [GENOMIC DNA]</scope>
    <source>
        <strain>GII-3-3X</strain>
    </source>
</reference>
<sequence>MTFEQAKKRSLVLKEQLEKWNYEYYVNDNPSVSDQEYDRALQELIAIEQQYSELITIDSPTQRVSGQISEKFNKYVHTSPMLSLGNAFNYDDLIHFDEQIKEFTALPEIEYTCELKIDGLSISLVYDNHVLVMGATRGDGLTGEDVTINIKQIKSIPLRIDQPTLIVRGEVYLSVEEFNKINEERVKNGEFKFANPRNAAAGTLRQLDSTIVAKRKLNAFLYYYVNALQDGIQSQYEALQRLEQLKFKINPEYRYCSNIAAVWAYIQEYEPKRNQLGYEIDGIVIKVNNLNLYNRIGYTAKNPKWAIAYKFPAEVVVTKLLNIFPSVGRTGRITYNAVLEPIRIVGTIVRAATLHNADFITERDIRIGDNVQVKKAGDIIPEVINYVAARRQKNAQKWQEATHCPECNSLLERVEGEVDQYCINSVCPKKITRGLEHYCSRNAMNIEGISEKIIERLFKLEYLKSFSDLYQLEQYRAEIIELENFGEKSFENMITSINNSKNNSLERLLFALGIRHVGQKTAKLLARQFKTIDNLAAMNIEQLSIINDIGPIVAASVVDYFAIPANQQELALLRQNGVKMEYFATNQHLAQKFENYRFVITGVLSKSREYFKELIESYGGQVSESVSAKTTYLLAGTDAGNKLVKAQKLNVKIINEEEFQQLLSKED</sequence>
<dbReference type="EC" id="6.5.1.2" evidence="1"/>
<dbReference type="EMBL" id="AM285321">
    <property type="protein sequence ID" value="CAK99793.1"/>
    <property type="molecule type" value="Genomic_DNA"/>
</dbReference>
<dbReference type="RefSeq" id="WP_277945260.1">
    <property type="nucleotide sequence ID" value="NZ_CP096807.1"/>
</dbReference>
<dbReference type="SMR" id="Q14L37"/>
<dbReference type="STRING" id="2133.SCITRI_001783"/>
<dbReference type="GO" id="GO:0005829">
    <property type="term" value="C:cytosol"/>
    <property type="evidence" value="ECO:0007669"/>
    <property type="project" value="TreeGrafter"/>
</dbReference>
<dbReference type="GO" id="GO:0003677">
    <property type="term" value="F:DNA binding"/>
    <property type="evidence" value="ECO:0007669"/>
    <property type="project" value="InterPro"/>
</dbReference>
<dbReference type="GO" id="GO:0003911">
    <property type="term" value="F:DNA ligase (NAD+) activity"/>
    <property type="evidence" value="ECO:0007669"/>
    <property type="project" value="UniProtKB-UniRule"/>
</dbReference>
<dbReference type="GO" id="GO:0046872">
    <property type="term" value="F:metal ion binding"/>
    <property type="evidence" value="ECO:0007669"/>
    <property type="project" value="UniProtKB-KW"/>
</dbReference>
<dbReference type="GO" id="GO:0006281">
    <property type="term" value="P:DNA repair"/>
    <property type="evidence" value="ECO:0007669"/>
    <property type="project" value="UniProtKB-KW"/>
</dbReference>
<dbReference type="GO" id="GO:0006260">
    <property type="term" value="P:DNA replication"/>
    <property type="evidence" value="ECO:0007669"/>
    <property type="project" value="UniProtKB-KW"/>
</dbReference>
<dbReference type="CDD" id="cd17748">
    <property type="entry name" value="BRCT_DNA_ligase_like"/>
    <property type="match status" value="1"/>
</dbReference>
<dbReference type="CDD" id="cd00114">
    <property type="entry name" value="LIGANc"/>
    <property type="match status" value="1"/>
</dbReference>
<dbReference type="FunFam" id="1.10.150.20:FF:000006">
    <property type="entry name" value="DNA ligase"/>
    <property type="match status" value="1"/>
</dbReference>
<dbReference type="FunFam" id="1.10.150.20:FF:000007">
    <property type="entry name" value="DNA ligase"/>
    <property type="match status" value="1"/>
</dbReference>
<dbReference type="FunFam" id="3.30.470.30:FF:000001">
    <property type="entry name" value="DNA ligase"/>
    <property type="match status" value="1"/>
</dbReference>
<dbReference type="Gene3D" id="6.20.10.30">
    <property type="match status" value="1"/>
</dbReference>
<dbReference type="Gene3D" id="1.10.150.20">
    <property type="entry name" value="5' to 3' exonuclease, C-terminal subdomain"/>
    <property type="match status" value="2"/>
</dbReference>
<dbReference type="Gene3D" id="3.40.50.10190">
    <property type="entry name" value="BRCT domain"/>
    <property type="match status" value="1"/>
</dbReference>
<dbReference type="Gene3D" id="3.30.470.30">
    <property type="entry name" value="DNA ligase/mRNA capping enzyme"/>
    <property type="match status" value="1"/>
</dbReference>
<dbReference type="Gene3D" id="1.10.287.610">
    <property type="entry name" value="Helix hairpin bin"/>
    <property type="match status" value="1"/>
</dbReference>
<dbReference type="Gene3D" id="2.40.50.140">
    <property type="entry name" value="Nucleic acid-binding proteins"/>
    <property type="match status" value="1"/>
</dbReference>
<dbReference type="HAMAP" id="MF_01588">
    <property type="entry name" value="DNA_ligase_A"/>
    <property type="match status" value="1"/>
</dbReference>
<dbReference type="InterPro" id="IPR001357">
    <property type="entry name" value="BRCT_dom"/>
</dbReference>
<dbReference type="InterPro" id="IPR036420">
    <property type="entry name" value="BRCT_dom_sf"/>
</dbReference>
<dbReference type="InterPro" id="IPR041663">
    <property type="entry name" value="DisA/LigA_HHH"/>
</dbReference>
<dbReference type="InterPro" id="IPR001679">
    <property type="entry name" value="DNA_ligase"/>
</dbReference>
<dbReference type="InterPro" id="IPR013839">
    <property type="entry name" value="DNAligase_adenylation"/>
</dbReference>
<dbReference type="InterPro" id="IPR013840">
    <property type="entry name" value="DNAligase_N"/>
</dbReference>
<dbReference type="InterPro" id="IPR003583">
    <property type="entry name" value="Hlx-hairpin-Hlx_DNA-bd_motif"/>
</dbReference>
<dbReference type="InterPro" id="IPR012340">
    <property type="entry name" value="NA-bd_OB-fold"/>
</dbReference>
<dbReference type="InterPro" id="IPR004150">
    <property type="entry name" value="NAD_DNA_ligase_OB"/>
</dbReference>
<dbReference type="InterPro" id="IPR010994">
    <property type="entry name" value="RuvA_2-like"/>
</dbReference>
<dbReference type="InterPro" id="IPR004149">
    <property type="entry name" value="Znf_DNAligase_C4"/>
</dbReference>
<dbReference type="NCBIfam" id="TIGR00575">
    <property type="entry name" value="dnlj"/>
    <property type="match status" value="1"/>
</dbReference>
<dbReference type="NCBIfam" id="NF005932">
    <property type="entry name" value="PRK07956.1"/>
    <property type="match status" value="1"/>
</dbReference>
<dbReference type="PANTHER" id="PTHR23389">
    <property type="entry name" value="CHROMOSOME TRANSMISSION FIDELITY FACTOR 18"/>
    <property type="match status" value="1"/>
</dbReference>
<dbReference type="PANTHER" id="PTHR23389:SF9">
    <property type="entry name" value="DNA LIGASE"/>
    <property type="match status" value="1"/>
</dbReference>
<dbReference type="Pfam" id="PF00533">
    <property type="entry name" value="BRCT"/>
    <property type="match status" value="1"/>
</dbReference>
<dbReference type="Pfam" id="PF01653">
    <property type="entry name" value="DNA_ligase_aden"/>
    <property type="match status" value="1"/>
</dbReference>
<dbReference type="Pfam" id="PF03120">
    <property type="entry name" value="DNA_ligase_OB"/>
    <property type="match status" value="1"/>
</dbReference>
<dbReference type="Pfam" id="PF03119">
    <property type="entry name" value="DNA_ligase_ZBD"/>
    <property type="match status" value="1"/>
</dbReference>
<dbReference type="Pfam" id="PF12826">
    <property type="entry name" value="HHH_2"/>
    <property type="match status" value="1"/>
</dbReference>
<dbReference type="PIRSF" id="PIRSF001604">
    <property type="entry name" value="LigA"/>
    <property type="match status" value="1"/>
</dbReference>
<dbReference type="SMART" id="SM00292">
    <property type="entry name" value="BRCT"/>
    <property type="match status" value="1"/>
</dbReference>
<dbReference type="SMART" id="SM00278">
    <property type="entry name" value="HhH1"/>
    <property type="match status" value="4"/>
</dbReference>
<dbReference type="SMART" id="SM00532">
    <property type="entry name" value="LIGANc"/>
    <property type="match status" value="1"/>
</dbReference>
<dbReference type="SUPFAM" id="SSF52113">
    <property type="entry name" value="BRCT domain"/>
    <property type="match status" value="1"/>
</dbReference>
<dbReference type="SUPFAM" id="SSF56091">
    <property type="entry name" value="DNA ligase/mRNA capping enzyme, catalytic domain"/>
    <property type="match status" value="1"/>
</dbReference>
<dbReference type="SUPFAM" id="SSF50249">
    <property type="entry name" value="Nucleic acid-binding proteins"/>
    <property type="match status" value="1"/>
</dbReference>
<dbReference type="SUPFAM" id="SSF47781">
    <property type="entry name" value="RuvA domain 2-like"/>
    <property type="match status" value="1"/>
</dbReference>
<dbReference type="PROSITE" id="PS50172">
    <property type="entry name" value="BRCT"/>
    <property type="match status" value="1"/>
</dbReference>
<feature type="chain" id="PRO_0000313445" description="DNA ligase">
    <location>
        <begin position="1"/>
        <end position="667"/>
    </location>
</feature>
<feature type="domain" description="BRCT" evidence="1">
    <location>
        <begin position="588"/>
        <end position="667"/>
    </location>
</feature>
<feature type="active site" description="N6-AMP-lysine intermediate" evidence="1">
    <location>
        <position position="116"/>
    </location>
</feature>
<feature type="binding site" evidence="1">
    <location>
        <begin position="34"/>
        <end position="38"/>
    </location>
    <ligand>
        <name>NAD(+)</name>
        <dbReference type="ChEBI" id="CHEBI:57540"/>
    </ligand>
</feature>
<feature type="binding site" evidence="1">
    <location>
        <begin position="83"/>
        <end position="84"/>
    </location>
    <ligand>
        <name>NAD(+)</name>
        <dbReference type="ChEBI" id="CHEBI:57540"/>
    </ligand>
</feature>
<feature type="binding site" evidence="1">
    <location>
        <position position="114"/>
    </location>
    <ligand>
        <name>NAD(+)</name>
        <dbReference type="ChEBI" id="CHEBI:57540"/>
    </ligand>
</feature>
<feature type="binding site" evidence="1">
    <location>
        <position position="137"/>
    </location>
    <ligand>
        <name>NAD(+)</name>
        <dbReference type="ChEBI" id="CHEBI:57540"/>
    </ligand>
</feature>
<feature type="binding site" evidence="1">
    <location>
        <position position="170"/>
    </location>
    <ligand>
        <name>NAD(+)</name>
        <dbReference type="ChEBI" id="CHEBI:57540"/>
    </ligand>
</feature>
<feature type="binding site" evidence="1">
    <location>
        <position position="286"/>
    </location>
    <ligand>
        <name>NAD(+)</name>
        <dbReference type="ChEBI" id="CHEBI:57540"/>
    </ligand>
</feature>
<feature type="binding site" evidence="1">
    <location>
        <position position="310"/>
    </location>
    <ligand>
        <name>NAD(+)</name>
        <dbReference type="ChEBI" id="CHEBI:57540"/>
    </ligand>
</feature>
<feature type="binding site" evidence="1">
    <location>
        <position position="404"/>
    </location>
    <ligand>
        <name>Zn(2+)</name>
        <dbReference type="ChEBI" id="CHEBI:29105"/>
    </ligand>
</feature>
<feature type="binding site" evidence="1">
    <location>
        <position position="407"/>
    </location>
    <ligand>
        <name>Zn(2+)</name>
        <dbReference type="ChEBI" id="CHEBI:29105"/>
    </ligand>
</feature>
<feature type="binding site" evidence="1">
    <location>
        <position position="422"/>
    </location>
    <ligand>
        <name>Zn(2+)</name>
        <dbReference type="ChEBI" id="CHEBI:29105"/>
    </ligand>
</feature>
<feature type="binding site" evidence="1">
    <location>
        <position position="427"/>
    </location>
    <ligand>
        <name>Zn(2+)</name>
        <dbReference type="ChEBI" id="CHEBI:29105"/>
    </ligand>
</feature>
<name>DNLJ_SPICI</name>
<comment type="function">
    <text evidence="1">DNA ligase that catalyzes the formation of phosphodiester linkages between 5'-phosphoryl and 3'-hydroxyl groups in double-stranded DNA using NAD as a coenzyme and as the energy source for the reaction. It is essential for DNA replication and repair of damaged DNA.</text>
</comment>
<comment type="catalytic activity">
    <reaction evidence="1">
        <text>NAD(+) + (deoxyribonucleotide)n-3'-hydroxyl + 5'-phospho-(deoxyribonucleotide)m = (deoxyribonucleotide)n+m + AMP + beta-nicotinamide D-nucleotide.</text>
        <dbReference type="EC" id="6.5.1.2"/>
    </reaction>
</comment>
<comment type="cofactor">
    <cofactor evidence="1">
        <name>Mg(2+)</name>
        <dbReference type="ChEBI" id="CHEBI:18420"/>
    </cofactor>
    <cofactor evidence="1">
        <name>Mn(2+)</name>
        <dbReference type="ChEBI" id="CHEBI:29035"/>
    </cofactor>
</comment>
<comment type="similarity">
    <text evidence="1">Belongs to the NAD-dependent DNA ligase family. LigA subfamily.</text>
</comment>
<proteinExistence type="inferred from homology"/>
<evidence type="ECO:0000255" key="1">
    <source>
        <dbReference type="HAMAP-Rule" id="MF_01588"/>
    </source>
</evidence>